<sequence>MAPPAAAPELGSCCICLDAITGAARALPCLHAFCLACIRRWLEGRPTCPLCKAPVQSLIHSVASDECFEEIPVGGGPGADGALEPDAAVIWGEDYDAGPIDLTAADGEAPGAGGEAGAAGGSEAGGGAGGAEAAGEARGAGAGRAAGAAGGRAGRGADAAQEFIDRVARGPRLPLLPNTPGHGPGAPYLRRVVEWVEGALVGTFAVTARELAAMTDYVMAMLAECGFDDDGLADAMEPLIGEDDAPAFVRSLLFVAARCVTVGPSHLIPQQSAPPGGRGVVFLDTSDSDSEGSEDDSWSESEESSSGLSTSDLTAIDDTETEPETDAEVESRRTRGASGAARARRPAERQYVSTRGRQTPAVQPAPRSLARRPCGRAAAVSAPPSSRSRGGRRDPRLPAAPRAAPAAQARACSPEPREEGRGAGLGVAAGETAGWGVGSEEGRGERRAKLLGEAGPPRVQARRRRRTELDRAPTPAPAPAPAPAPISTMIDLTANAPARPADPAPAAALGPALAGAQIGTPAAAAAVTAAAAAPSVARGSAPSPAVTAAATGTAAAISTRAPTPSPAGRAPAADPRRAGAPALAGAARAEAGRNGNPGRERRPASAMARGDLDPGPESSAQKRRRTEMEVAAWVRESLLGTPRRSSAALAPQPGGRQGPSLAGLLGRCSGGSAWRQ</sequence>
<organismHost>
    <name type="scientific">Bos taurus</name>
    <name type="common">Bovine</name>
    <dbReference type="NCBI Taxonomy" id="9913"/>
</organismHost>
<evidence type="ECO:0000250" key="1"/>
<evidence type="ECO:0000250" key="2">
    <source>
        <dbReference type="UniProtKB" id="P29128"/>
    </source>
</evidence>
<evidence type="ECO:0000255" key="3">
    <source>
        <dbReference type="PROSITE-ProRule" id="PRU00175"/>
    </source>
</evidence>
<evidence type="ECO:0000256" key="4">
    <source>
        <dbReference type="SAM" id="MobiDB-lite"/>
    </source>
</evidence>
<evidence type="ECO:0000305" key="5"/>
<name>ICP0_BHV1K</name>
<dbReference type="EC" id="2.3.2.27"/>
<dbReference type="EMBL" id="M84464">
    <property type="protein sequence ID" value="AAA46061.1"/>
    <property type="molecule type" value="Genomic_DNA"/>
</dbReference>
<dbReference type="PIR" id="A38209">
    <property type="entry name" value="EDBE22"/>
</dbReference>
<dbReference type="SMR" id="P29836"/>
<dbReference type="GO" id="GO:0003677">
    <property type="term" value="F:DNA binding"/>
    <property type="evidence" value="ECO:0007669"/>
    <property type="project" value="UniProtKB-KW"/>
</dbReference>
<dbReference type="GO" id="GO:0061630">
    <property type="term" value="F:ubiquitin protein ligase activity"/>
    <property type="evidence" value="ECO:0007669"/>
    <property type="project" value="TreeGrafter"/>
</dbReference>
<dbReference type="GO" id="GO:0008270">
    <property type="term" value="F:zinc ion binding"/>
    <property type="evidence" value="ECO:0007669"/>
    <property type="project" value="UniProtKB-KW"/>
</dbReference>
<dbReference type="GO" id="GO:0006513">
    <property type="term" value="P:protein monoubiquitination"/>
    <property type="evidence" value="ECO:0007669"/>
    <property type="project" value="TreeGrafter"/>
</dbReference>
<dbReference type="GO" id="GO:0000209">
    <property type="term" value="P:protein polyubiquitination"/>
    <property type="evidence" value="ECO:0007669"/>
    <property type="project" value="TreeGrafter"/>
</dbReference>
<dbReference type="GO" id="GO:0075342">
    <property type="term" value="P:symbiont-mediated disruption of host cell PML body"/>
    <property type="evidence" value="ECO:0000250"/>
    <property type="project" value="UniProtKB"/>
</dbReference>
<dbReference type="GO" id="GO:0039593">
    <property type="term" value="P:symbiont-mediated perturbation of host exit from mitosis"/>
    <property type="evidence" value="ECO:0007669"/>
    <property type="project" value="UniProtKB-KW"/>
</dbReference>
<dbReference type="GO" id="GO:0039648">
    <property type="term" value="P:symbiont-mediated perturbation of host ubiquitin-like protein modification"/>
    <property type="evidence" value="ECO:0007669"/>
    <property type="project" value="UniProtKB-KW"/>
</dbReference>
<dbReference type="GO" id="GO:0039548">
    <property type="term" value="P:symbiont-mediated suppression of host cytoplasmic pattern recognition receptor signaling pathway via inhibition of IRF3 activity"/>
    <property type="evidence" value="ECO:0007669"/>
    <property type="project" value="UniProtKB-KW"/>
</dbReference>
<dbReference type="CDD" id="cd23130">
    <property type="entry name" value="RING-HC_EHV1-like"/>
    <property type="match status" value="1"/>
</dbReference>
<dbReference type="FunFam" id="3.30.40.10:FF:000136">
    <property type="entry name" value="E3 ubiquitin-protein ligase Topors"/>
    <property type="match status" value="1"/>
</dbReference>
<dbReference type="Gene3D" id="3.30.40.10">
    <property type="entry name" value="Zinc/RING finger domain, C3HC4 (zinc finger)"/>
    <property type="match status" value="1"/>
</dbReference>
<dbReference type="InterPro" id="IPR001841">
    <property type="entry name" value="Znf_RING"/>
</dbReference>
<dbReference type="InterPro" id="IPR013083">
    <property type="entry name" value="Znf_RING/FYVE/PHD"/>
</dbReference>
<dbReference type="InterPro" id="IPR017907">
    <property type="entry name" value="Znf_RING_CS"/>
</dbReference>
<dbReference type="PANTHER" id="PTHR46077">
    <property type="entry name" value="E3 UBIQUITIN-PROTEIN LIGASE TOPORS"/>
    <property type="match status" value="1"/>
</dbReference>
<dbReference type="PANTHER" id="PTHR46077:SF1">
    <property type="entry name" value="TOP1 BINDING ARGININE_SERINE RICH PROTEIN, E3 UBIQUITIN LIGASE"/>
    <property type="match status" value="1"/>
</dbReference>
<dbReference type="Pfam" id="PF13639">
    <property type="entry name" value="zf-RING_2"/>
    <property type="match status" value="1"/>
</dbReference>
<dbReference type="SMART" id="SM00184">
    <property type="entry name" value="RING"/>
    <property type="match status" value="1"/>
</dbReference>
<dbReference type="SUPFAM" id="SSF57850">
    <property type="entry name" value="RING/U-box"/>
    <property type="match status" value="1"/>
</dbReference>
<dbReference type="PROSITE" id="PS00518">
    <property type="entry name" value="ZF_RING_1"/>
    <property type="match status" value="1"/>
</dbReference>
<dbReference type="PROSITE" id="PS50089">
    <property type="entry name" value="ZF_RING_2"/>
    <property type="match status" value="1"/>
</dbReference>
<accession>P29836</accession>
<reference key="1">
    <citation type="journal article" date="1992" name="J. Virol.">
        <title>Immediate-early RNA 2.9 and early RNA 2.6 of bovine herpesvirus 1 are 3' coterminal and encode a putative zinc finger transactivator protein.</title>
        <authorList>
            <person name="Wirth U.V."/>
            <person name="Fraefel C."/>
            <person name="Vogt B."/>
            <person name="Vlcek C."/>
            <person name="Paces V."/>
            <person name="Schwyzer M."/>
        </authorList>
    </citation>
    <scope>NUCLEOTIDE SEQUENCE [GENOMIC DNA]</scope>
</reference>
<protein>
    <recommendedName>
        <fullName>E3 ubiquitin-protein ligase ICP0</fullName>
        <ecNumber>2.3.2.27</ecNumber>
    </recommendedName>
    <alternativeName>
        <fullName>IER 2.9/ER2.6</fullName>
    </alternativeName>
    <alternativeName>
        <fullName>P135 protein</fullName>
    </alternativeName>
    <alternativeName>
        <fullName evidence="5">RING-type E3 ubiquitin transferase ICP0</fullName>
    </alternativeName>
</protein>
<gene>
    <name type="primary">BICP0</name>
</gene>
<organism>
    <name type="scientific">Bovine herpesvirus 1.2 (strain K22)</name>
    <name type="common">BoHV-1</name>
    <name type="synonym">Infectious bovine rhinotracheitis virus</name>
    <dbReference type="NCBI Taxonomy" id="31519"/>
    <lineage>
        <taxon>Viruses</taxon>
        <taxon>Duplodnaviria</taxon>
        <taxon>Heunggongvirae</taxon>
        <taxon>Peploviricota</taxon>
        <taxon>Herviviricetes</taxon>
        <taxon>Herpesvirales</taxon>
        <taxon>Orthoherpesviridae</taxon>
        <taxon>Alphaherpesvirinae</taxon>
        <taxon>Varicellovirus</taxon>
        <taxon>Varicellovirus bovinealpha1</taxon>
    </lineage>
</organism>
<keyword id="KW-0010">Activator</keyword>
<keyword id="KW-0238">DNA-binding</keyword>
<keyword id="KW-0244">Early protein</keyword>
<keyword id="KW-0945">Host-virus interaction</keyword>
<keyword id="KW-1090">Inhibition of host innate immune response by virus</keyword>
<keyword id="KW-1092">Inhibition of host IRF3 by virus</keyword>
<keyword id="KW-1098">Inhibition of host mitotic exit by virus</keyword>
<keyword id="KW-1113">Inhibition of host RLR pathway by virus</keyword>
<keyword id="KW-0479">Metal-binding</keyword>
<keyword id="KW-1121">Modulation of host cell cycle by virus</keyword>
<keyword id="KW-1128">Modulation of host ubiquitin pathway by viral E3 ligase</keyword>
<keyword id="KW-1130">Modulation of host ubiquitin pathway by virus</keyword>
<keyword id="KW-0597">Phosphoprotein</keyword>
<keyword id="KW-0678">Repressor</keyword>
<keyword id="KW-0804">Transcription</keyword>
<keyword id="KW-0805">Transcription regulation</keyword>
<keyword id="KW-0808">Transferase</keyword>
<keyword id="KW-0832">Ubl conjugation</keyword>
<keyword id="KW-0833">Ubl conjugation pathway</keyword>
<keyword id="KW-0899">Viral immunoevasion</keyword>
<keyword id="KW-0862">Zinc</keyword>
<keyword id="KW-0863">Zinc-finger</keyword>
<feature type="chain" id="PRO_0000056357" description="E3 ubiquitin-protein ligase ICP0">
    <location>
        <begin position="1"/>
        <end position="676"/>
    </location>
</feature>
<feature type="zinc finger region" description="RING-type" evidence="3">
    <location>
        <begin position="13"/>
        <end position="52"/>
    </location>
</feature>
<feature type="region of interest" description="Disordered" evidence="4">
    <location>
        <begin position="101"/>
        <end position="135"/>
    </location>
</feature>
<feature type="region of interest" description="Disordered" evidence="4">
    <location>
        <begin position="266"/>
        <end position="486"/>
    </location>
</feature>
<feature type="region of interest" description="Disordered" evidence="4">
    <location>
        <begin position="555"/>
        <end position="676"/>
    </location>
</feature>
<feature type="compositionally biased region" description="Gly residues" evidence="4">
    <location>
        <begin position="110"/>
        <end position="135"/>
    </location>
</feature>
<feature type="compositionally biased region" description="Acidic residues" evidence="4">
    <location>
        <begin position="286"/>
        <end position="303"/>
    </location>
</feature>
<feature type="compositionally biased region" description="Low complexity" evidence="4">
    <location>
        <begin position="304"/>
        <end position="314"/>
    </location>
</feature>
<feature type="compositionally biased region" description="Acidic residues" evidence="4">
    <location>
        <begin position="315"/>
        <end position="328"/>
    </location>
</feature>
<feature type="compositionally biased region" description="Polar residues" evidence="4">
    <location>
        <begin position="351"/>
        <end position="361"/>
    </location>
</feature>
<feature type="compositionally biased region" description="Low complexity" evidence="4">
    <location>
        <begin position="375"/>
        <end position="388"/>
    </location>
</feature>
<feature type="compositionally biased region" description="Low complexity" evidence="4">
    <location>
        <begin position="397"/>
        <end position="411"/>
    </location>
</feature>
<feature type="compositionally biased region" description="Gly residues" evidence="4">
    <location>
        <begin position="422"/>
        <end position="439"/>
    </location>
</feature>
<feature type="compositionally biased region" description="Basic and acidic residues" evidence="4">
    <location>
        <begin position="440"/>
        <end position="450"/>
    </location>
</feature>
<feature type="compositionally biased region" description="Pro residues" evidence="4">
    <location>
        <begin position="474"/>
        <end position="484"/>
    </location>
</feature>
<feature type="compositionally biased region" description="Low complexity" evidence="4">
    <location>
        <begin position="555"/>
        <end position="597"/>
    </location>
</feature>
<comment type="function">
    <text evidence="2">Evades nuclear antiviral defenses triggered by dsDNA viruses. Acts during the initial stages of lytic infection and the reactivation of latent viral genome. Prevents the antiviral effect of nuclear bodies by degrading host PML and SP100.</text>
</comment>
<comment type="catalytic activity">
    <reaction>
        <text>S-ubiquitinyl-[E2 ubiquitin-conjugating enzyme]-L-cysteine + [acceptor protein]-L-lysine = [E2 ubiquitin-conjugating enzyme]-L-cysteine + N(6)-ubiquitinyl-[acceptor protein]-L-lysine.</text>
        <dbReference type="EC" id="2.3.2.27"/>
    </reaction>
</comment>
<comment type="PTM">
    <text evidence="1">Auto-ubiquitinated.</text>
</comment>
<comment type="PTM">
    <text>The strongly acidic region might serve as a transcriptional activation domain, possibly regulated through phosphorylation by casein kinase II.</text>
</comment>
<proteinExistence type="inferred from homology"/>